<dbReference type="EMBL" id="AL844852">
    <property type="status" value="NOT_ANNOTATED_CDS"/>
    <property type="molecule type" value="Genomic_DNA"/>
</dbReference>
<dbReference type="CCDS" id="CCDS50768.1"/>
<dbReference type="RefSeq" id="NP_001078847.1">
    <property type="nucleotide sequence ID" value="NM_001085378.2"/>
</dbReference>
<dbReference type="SMR" id="A2AQP0"/>
<dbReference type="BioGRID" id="580721">
    <property type="interactions" value="2"/>
</dbReference>
<dbReference type="FunCoup" id="A2AQP0">
    <property type="interactions" value="138"/>
</dbReference>
<dbReference type="STRING" id="10090.ENSMUSP00000090672"/>
<dbReference type="GlyGen" id="A2AQP0">
    <property type="glycosylation" value="1 site, 1 O-linked glycan (1 site)"/>
</dbReference>
<dbReference type="iPTMnet" id="A2AQP0"/>
<dbReference type="PhosphoSitePlus" id="A2AQP0"/>
<dbReference type="jPOST" id="A2AQP0"/>
<dbReference type="PaxDb" id="10090-ENSMUSP00000090672"/>
<dbReference type="PeptideAtlas" id="A2AQP0"/>
<dbReference type="ProteomicsDB" id="293596"/>
<dbReference type="Antibodypedia" id="54800">
    <property type="antibodies" value="46 antibodies from 9 providers"/>
</dbReference>
<dbReference type="Ensembl" id="ENSMUST00000092995.6">
    <property type="protein sequence ID" value="ENSMUSP00000090672.6"/>
    <property type="gene ID" value="ENSMUSG00000074652.4"/>
</dbReference>
<dbReference type="GeneID" id="668940"/>
<dbReference type="KEGG" id="mmu:668940"/>
<dbReference type="UCSC" id="uc008nla.2">
    <property type="organism name" value="mouse"/>
</dbReference>
<dbReference type="AGR" id="MGI:3710243"/>
<dbReference type="CTD" id="57644"/>
<dbReference type="MGI" id="MGI:3710243">
    <property type="gene designation" value="Myh7b"/>
</dbReference>
<dbReference type="VEuPathDB" id="HostDB:ENSMUSG00000074652"/>
<dbReference type="eggNOG" id="KOG0161">
    <property type="taxonomic scope" value="Eukaryota"/>
</dbReference>
<dbReference type="GeneTree" id="ENSGT00940000160950"/>
<dbReference type="HOGENOM" id="CLU_000192_8_1_1"/>
<dbReference type="InParanoid" id="A2AQP0"/>
<dbReference type="OMA" id="DTTQDKQ"/>
<dbReference type="OrthoDB" id="312459at2759"/>
<dbReference type="PhylomeDB" id="A2AQP0"/>
<dbReference type="TreeFam" id="TF314375"/>
<dbReference type="BioGRID-ORCS" id="668940">
    <property type="hits" value="1 hit in 78 CRISPR screens"/>
</dbReference>
<dbReference type="PRO" id="PR:A2AQP0"/>
<dbReference type="Proteomes" id="UP000000589">
    <property type="component" value="Chromosome 2"/>
</dbReference>
<dbReference type="RNAct" id="A2AQP0">
    <property type="molecule type" value="protein"/>
</dbReference>
<dbReference type="Bgee" id="ENSMUSG00000074652">
    <property type="expression patterns" value="Expressed in mesenchyme of forearm and 90 other cell types or tissues"/>
</dbReference>
<dbReference type="GO" id="GO:0097512">
    <property type="term" value="C:cardiac myofibril"/>
    <property type="evidence" value="ECO:0000314"/>
    <property type="project" value="MGI"/>
</dbReference>
<dbReference type="GO" id="GO:0016020">
    <property type="term" value="C:membrane"/>
    <property type="evidence" value="ECO:0007669"/>
    <property type="project" value="UniProtKB-SubCell"/>
</dbReference>
<dbReference type="GO" id="GO:0016459">
    <property type="term" value="C:myosin complex"/>
    <property type="evidence" value="ECO:0007669"/>
    <property type="project" value="UniProtKB-KW"/>
</dbReference>
<dbReference type="GO" id="GO:0032982">
    <property type="term" value="C:myosin filament"/>
    <property type="evidence" value="ECO:0007669"/>
    <property type="project" value="UniProtKB-KW"/>
</dbReference>
<dbReference type="GO" id="GO:0051015">
    <property type="term" value="F:actin filament binding"/>
    <property type="evidence" value="ECO:0007669"/>
    <property type="project" value="InterPro"/>
</dbReference>
<dbReference type="GO" id="GO:0005524">
    <property type="term" value="F:ATP binding"/>
    <property type="evidence" value="ECO:0007669"/>
    <property type="project" value="UniProtKB-KW"/>
</dbReference>
<dbReference type="GO" id="GO:0003774">
    <property type="term" value="F:cytoskeletal motor activity"/>
    <property type="evidence" value="ECO:0007669"/>
    <property type="project" value="InterPro"/>
</dbReference>
<dbReference type="GO" id="GO:1905289">
    <property type="term" value="P:regulation of CAMKK-AMPK signaling cascade"/>
    <property type="evidence" value="ECO:0007669"/>
    <property type="project" value="Ensembl"/>
</dbReference>
<dbReference type="GO" id="GO:0086004">
    <property type="term" value="P:regulation of cardiac muscle cell contraction"/>
    <property type="evidence" value="ECO:0007669"/>
    <property type="project" value="Ensembl"/>
</dbReference>
<dbReference type="GO" id="GO:0051480">
    <property type="term" value="P:regulation of cytosolic calcium ion concentration"/>
    <property type="evidence" value="ECO:0007669"/>
    <property type="project" value="Ensembl"/>
</dbReference>
<dbReference type="CDD" id="cd14927">
    <property type="entry name" value="MYSc_Myh7b"/>
    <property type="match status" value="1"/>
</dbReference>
<dbReference type="FunFam" id="1.10.10.820:FF:000001">
    <property type="entry name" value="Myosin heavy chain"/>
    <property type="match status" value="1"/>
</dbReference>
<dbReference type="FunFam" id="1.20.5.340:FF:000013">
    <property type="entry name" value="Myosin heavy chain"/>
    <property type="match status" value="1"/>
</dbReference>
<dbReference type="FunFam" id="1.20.5.340:FF:000036">
    <property type="entry name" value="Myosin heavy chain"/>
    <property type="match status" value="1"/>
</dbReference>
<dbReference type="FunFam" id="1.20.5.370:FF:000001">
    <property type="entry name" value="Myosin heavy chain"/>
    <property type="match status" value="1"/>
</dbReference>
<dbReference type="FunFam" id="1.20.5.370:FF:000008">
    <property type="entry name" value="Myosin heavy chain"/>
    <property type="match status" value="1"/>
</dbReference>
<dbReference type="FunFam" id="1.20.5.4820:FF:000001">
    <property type="entry name" value="Myosin heavy chain"/>
    <property type="match status" value="1"/>
</dbReference>
<dbReference type="FunFam" id="1.20.58.530:FF:000001">
    <property type="entry name" value="Myosin heavy chain"/>
    <property type="match status" value="1"/>
</dbReference>
<dbReference type="FunFam" id="2.30.30.360:FF:000001">
    <property type="entry name" value="Myosin heavy chain"/>
    <property type="match status" value="1"/>
</dbReference>
<dbReference type="FunFam" id="1.20.5.340:FF:000019">
    <property type="entry name" value="Myosin heavy chain, isoform G"/>
    <property type="match status" value="1"/>
</dbReference>
<dbReference type="FunFam" id="1.20.5.340:FF:000021">
    <property type="entry name" value="Myosin heavy chain, isoform G"/>
    <property type="match status" value="1"/>
</dbReference>
<dbReference type="FunFam" id="1.20.5.340:FF:000025">
    <property type="entry name" value="Myosin heavy chain, isoform G"/>
    <property type="match status" value="1"/>
</dbReference>
<dbReference type="FunFam" id="1.20.5.370:FF:000009">
    <property type="entry name" value="Myosin heavy chain, isoform G"/>
    <property type="match status" value="1"/>
</dbReference>
<dbReference type="FunFam" id="1.20.5.370:FF:000010">
    <property type="entry name" value="Myosin heavy chain, isoform G"/>
    <property type="match status" value="1"/>
</dbReference>
<dbReference type="FunFam" id="3.40.850.10:FF:000024">
    <property type="entry name" value="Myosin heavy chain, isoform J"/>
    <property type="match status" value="1"/>
</dbReference>
<dbReference type="FunFam" id="1.20.120.720:FF:000001">
    <property type="entry name" value="Myosin heavy chain, muscle"/>
    <property type="match status" value="1"/>
</dbReference>
<dbReference type="Gene3D" id="1.10.10.820">
    <property type="match status" value="1"/>
</dbReference>
<dbReference type="Gene3D" id="1.20.5.340">
    <property type="match status" value="5"/>
</dbReference>
<dbReference type="Gene3D" id="1.20.5.370">
    <property type="match status" value="4"/>
</dbReference>
<dbReference type="Gene3D" id="1.20.5.4820">
    <property type="match status" value="1"/>
</dbReference>
<dbReference type="Gene3D" id="1.20.58.530">
    <property type="match status" value="1"/>
</dbReference>
<dbReference type="Gene3D" id="6.10.250.2420">
    <property type="match status" value="1"/>
</dbReference>
<dbReference type="Gene3D" id="3.40.850.10">
    <property type="entry name" value="Kinesin motor domain"/>
    <property type="match status" value="1"/>
</dbReference>
<dbReference type="Gene3D" id="2.30.30.360">
    <property type="entry name" value="Myosin S1 fragment, N-terminal"/>
    <property type="match status" value="1"/>
</dbReference>
<dbReference type="Gene3D" id="1.20.120.720">
    <property type="entry name" value="Myosin VI head, motor domain, U50 subdomain"/>
    <property type="match status" value="1"/>
</dbReference>
<dbReference type="InterPro" id="IPR036961">
    <property type="entry name" value="Kinesin_motor_dom_sf"/>
</dbReference>
<dbReference type="InterPro" id="IPR001609">
    <property type="entry name" value="Myosin_head_motor_dom-like"/>
</dbReference>
<dbReference type="InterPro" id="IPR004009">
    <property type="entry name" value="Myosin_N"/>
</dbReference>
<dbReference type="InterPro" id="IPR008989">
    <property type="entry name" value="Myosin_S1_N"/>
</dbReference>
<dbReference type="InterPro" id="IPR002928">
    <property type="entry name" value="Myosin_tail"/>
</dbReference>
<dbReference type="InterPro" id="IPR027417">
    <property type="entry name" value="P-loop_NTPase"/>
</dbReference>
<dbReference type="InterPro" id="IPR014751">
    <property type="entry name" value="XRCC4-like_C"/>
</dbReference>
<dbReference type="PANTHER" id="PTHR45615">
    <property type="entry name" value="MYOSIN HEAVY CHAIN, NON-MUSCLE"/>
    <property type="match status" value="1"/>
</dbReference>
<dbReference type="PANTHER" id="PTHR45615:SF29">
    <property type="entry name" value="MYOSIN-7B"/>
    <property type="match status" value="1"/>
</dbReference>
<dbReference type="Pfam" id="PF00063">
    <property type="entry name" value="Myosin_head"/>
    <property type="match status" value="1"/>
</dbReference>
<dbReference type="Pfam" id="PF02736">
    <property type="entry name" value="Myosin_N"/>
    <property type="match status" value="1"/>
</dbReference>
<dbReference type="Pfam" id="PF01576">
    <property type="entry name" value="Myosin_tail_1"/>
    <property type="match status" value="1"/>
</dbReference>
<dbReference type="PRINTS" id="PR00193">
    <property type="entry name" value="MYOSINHEAVY"/>
</dbReference>
<dbReference type="SMART" id="SM00242">
    <property type="entry name" value="MYSc"/>
    <property type="match status" value="1"/>
</dbReference>
<dbReference type="SUPFAM" id="SSF90257">
    <property type="entry name" value="Myosin rod fragments"/>
    <property type="match status" value="6"/>
</dbReference>
<dbReference type="SUPFAM" id="SSF52540">
    <property type="entry name" value="P-loop containing nucleoside triphosphate hydrolases"/>
    <property type="match status" value="1"/>
</dbReference>
<dbReference type="PROSITE" id="PS50096">
    <property type="entry name" value="IQ"/>
    <property type="match status" value="1"/>
</dbReference>
<dbReference type="PROSITE" id="PS51456">
    <property type="entry name" value="MYOSIN_MOTOR"/>
    <property type="match status" value="1"/>
</dbReference>
<dbReference type="PROSITE" id="PS51844">
    <property type="entry name" value="SH3_LIKE"/>
    <property type="match status" value="1"/>
</dbReference>
<feature type="chain" id="PRO_0000349313" description="Myosin-7B">
    <location>
        <begin position="1"/>
        <end position="1941"/>
    </location>
</feature>
<feature type="domain" description="Myosin N-terminal SH3-like" evidence="5">
    <location>
        <begin position="30"/>
        <end position="80"/>
    </location>
</feature>
<feature type="domain" description="Myosin motor" evidence="4">
    <location>
        <begin position="84"/>
        <end position="785"/>
    </location>
</feature>
<feature type="domain" description="IQ" evidence="3">
    <location>
        <begin position="788"/>
        <end position="817"/>
    </location>
</feature>
<feature type="region of interest" description="Actin-binding" evidence="1">
    <location>
        <begin position="662"/>
        <end position="684"/>
    </location>
</feature>
<feature type="region of interest" description="Actin-binding" evidence="1">
    <location>
        <begin position="764"/>
        <end position="778"/>
    </location>
</feature>
<feature type="region of interest" description="Disordered" evidence="6">
    <location>
        <begin position="1887"/>
        <end position="1941"/>
    </location>
</feature>
<feature type="coiled-coil region" evidence="2">
    <location>
        <begin position="846"/>
        <end position="1935"/>
    </location>
</feature>
<feature type="compositionally biased region" description="Basic and acidic residues" evidence="6">
    <location>
        <begin position="1930"/>
        <end position="1941"/>
    </location>
</feature>
<feature type="binding site" evidence="1">
    <location>
        <begin position="177"/>
        <end position="184"/>
    </location>
    <ligand>
        <name>ATP</name>
        <dbReference type="ChEBI" id="CHEBI:30616"/>
    </ligand>
</feature>
<gene>
    <name type="primary">Myh7b</name>
</gene>
<sequence>MMDMSELGESACYLRQGYQEMMKVHTVPWDGKKRVWVPDEQDAYVEAEVKTEATGGKVTVETKDQKVLTVRETEMQPMNPPRFDLLEDMAMMTHLNEAAVLHNLRQRYARWMIYTYSGLFCVTINPYKWLPVYTAAVVAAYKGKRRSEAPPHIYAVADNAYNDMLRNRENQSMLITGESGAGKTVNTKRVIQYFAIVAALGDGPGKKAQFLATKTGGTLEDQIIEANPAMEAFGNAKTLRNDNSSRFGKFIRIHFGPTGKLASADIDSYLLEKSRVIFQLPGERGYHVYYQILSGKKPELQDMLLLSMNPYDYHFCSQGVTTVDNMDDGEELIATDHAMDILGFSVDEKCACYKIVGALLHFGNMKFKQKQREEQAEADGTESADKAAYLMGVSSGDLLKGLLHPRVRVGNEYVTKGQSVEQVVFAVGALAKATYDRLFRWLVSRINQTLDTKLPRQFFIGVLDIAGFEIFEFNSFEQLCINFTNEKLQQFFNQHMFVLEQEEYKREGIDWVFIDFGLDLQPCIDLIEKPLGILSILEEECMFPKASDASFRAKLYDNHSGKSPNFQQPRPDKKRKYQAHFEVVHYAGVVPYSIVGWLEKNKDPLNETVVPIFQKSQNRLLATLYENYAGSCSTEPPKSGVKEKRKKAASFQTVSQLHKENLNKLMTNLRATQPHFVRCIVPNENKTPGVMDSFLVLHQLRCNGVLEGIRICRQGFPNRLLYADFRQRYRILNPSAIPDDTFVDSRKATEKLLGSLDIDHTQYQFGHTKVFFKAGLLGILEELRDQRLAKVLTLLQARSRGRLMRLEYQRMLGGRDALFTIQWNIRAFNAVKNWSWMKLFFKMKPLLRSAQAEEELAALRAELRGLRGALATAEAKRQELEETQVSVTQEKNDLALQLQAEQDNLADAEERCHLLIKSKVQLEAKVKELSERLEDEEEVNADLAARRRKLEDECTELKKDIDDLELTLAKAEKEKQATENKVKNLTEEMAALDEAVVRLTKEKKALQEAHQQALGDLQAEEDRVSALAKAKIRLEQQVEDLECSLEQEKKLRMDTERAKRKLEGDLKLTQETVTDTTQDKQQLEEKLKKKDSELSQLNLRVEDEQLVGVQLQKKIKELQARAEELEEELEAERAARARVEKQRAEAARELEELSERLEEAGGASAGQREGCRKREAELGRLRRELEEAVLRHEATVAALRRKQADSAAELSEQVDSLQRIRQKLEKEKSELRMEVDDLGASVETLARGKASAEKLCRTYEDQLSEAKIKVEELQRQLADASTQRGRLQTENGELGRLLEEKESMISQLSRGKTSAAQSLEELRRQLEEESKAKGALAHAVQALRHDCDLLREQHEEESEAQAELQRLLSKANAEVAQWRSKYEADAIQRTEELEEAKKKLALRLQEAEEGVEAANAKCSSLEKAKLRLQTESEDVTLELERATSAAAALDKKQRHLERALEERRRQEEEMQRELEAAQREARGLGTELFRLRHSHEEALEALETLKRENKNLQEEISDLTDQVSLSGKSIQELEKAKKALEGEKSELQAALEEAEGALELEETKTLRIQLELSQVKAEVDRKLAEKDEECTNLRRNHQRAVESLQASLDAETRARNEALRLKKKMEGDLNDLELQLGHATRQAMEAQAATRLLQAQLKEEQAGRDEEQRLAAELREQGQALERRAALLAAELEELRAALEQGERSRRLAEQELLEATERLNLLHSQNTGLLNQKKKLEVDLAQLSGEVEEAAQERREAEEKAKKAITDAAMMAEELKKEQDTSAHLERMKKTLEQTVRELQARLEEAEQAALRGGKKQVQKLEAKVRELEAELDAEQKKHAEALKGVRKHERRVKELVYQTEEDRKNLARMQDLVDKLQSKVKSYKRQFEEAEQQASTNLAKYRKAQHELDDAEERADMAETQANKLRARSRDALGPKHKE</sequence>
<accession>A2AQP0</accession>
<keyword id="KW-0009">Actin-binding</keyword>
<keyword id="KW-0067">ATP-binding</keyword>
<keyword id="KW-0175">Coiled coil</keyword>
<keyword id="KW-0472">Membrane</keyword>
<keyword id="KW-0505">Motor protein</keyword>
<keyword id="KW-0514">Muscle protein</keyword>
<keyword id="KW-0518">Myosin</keyword>
<keyword id="KW-0547">Nucleotide-binding</keyword>
<keyword id="KW-1185">Reference proteome</keyword>
<keyword id="KW-0787">Thick filament</keyword>
<evidence type="ECO:0000250" key="1"/>
<evidence type="ECO:0000255" key="2"/>
<evidence type="ECO:0000255" key="3">
    <source>
        <dbReference type="PROSITE-ProRule" id="PRU00116"/>
    </source>
</evidence>
<evidence type="ECO:0000255" key="4">
    <source>
        <dbReference type="PROSITE-ProRule" id="PRU00782"/>
    </source>
</evidence>
<evidence type="ECO:0000255" key="5">
    <source>
        <dbReference type="PROSITE-ProRule" id="PRU01190"/>
    </source>
</evidence>
<evidence type="ECO:0000256" key="6">
    <source>
        <dbReference type="SAM" id="MobiDB-lite"/>
    </source>
</evidence>
<evidence type="ECO:0000305" key="7"/>
<name>MYH7B_MOUSE</name>
<protein>
    <recommendedName>
        <fullName>Myosin-7B</fullName>
    </recommendedName>
    <alternativeName>
        <fullName>Myosin cardiac muscle beta chain</fullName>
    </alternativeName>
    <alternativeName>
        <fullName>Myosin heavy chain 7B, cardiac muscle beta isoform</fullName>
    </alternativeName>
</protein>
<comment type="function">
    <text evidence="1">Involved in muscle contraction.</text>
</comment>
<comment type="subunit">
    <text evidence="1">Muscle myosin is a hexameric protein that consists of 2 heavy chain subunits (MHC), 2 alkali light chain subunits (MLC) and 2 regulatory light chain subunits (MLC-2).</text>
</comment>
<comment type="subcellular location">
    <subcellularLocation>
        <location evidence="1">Membrane</location>
        <topology evidence="1">Peripheral membrane protein</topology>
    </subcellularLocation>
</comment>
<comment type="miscellaneous">
    <text>The cardiac alpha isoform is a 'fast' ATPase myosin, while the beta isoform is a 'slow' ATPase.</text>
</comment>
<comment type="similarity">
    <text evidence="7">Belongs to the TRAFAC class myosin-kinesin ATPase superfamily. Myosin family.</text>
</comment>
<comment type="caution">
    <text evidence="7">Represents a conventional myosin. This protein should not be confused with the unconventional myosin-7 (MYO7).</text>
</comment>
<reference key="1">
    <citation type="journal article" date="2009" name="PLoS Biol.">
        <title>Lineage-specific biology revealed by a finished genome assembly of the mouse.</title>
        <authorList>
            <person name="Church D.M."/>
            <person name="Goodstadt L."/>
            <person name="Hillier L.W."/>
            <person name="Zody M.C."/>
            <person name="Goldstein S."/>
            <person name="She X."/>
            <person name="Bult C.J."/>
            <person name="Agarwala R."/>
            <person name="Cherry J.L."/>
            <person name="DiCuccio M."/>
            <person name="Hlavina W."/>
            <person name="Kapustin Y."/>
            <person name="Meric P."/>
            <person name="Maglott D."/>
            <person name="Birtle Z."/>
            <person name="Marques A.C."/>
            <person name="Graves T."/>
            <person name="Zhou S."/>
            <person name="Teague B."/>
            <person name="Potamousis K."/>
            <person name="Churas C."/>
            <person name="Place M."/>
            <person name="Herschleb J."/>
            <person name="Runnheim R."/>
            <person name="Forrest D."/>
            <person name="Amos-Landgraf J."/>
            <person name="Schwartz D.C."/>
            <person name="Cheng Z."/>
            <person name="Lindblad-Toh K."/>
            <person name="Eichler E.E."/>
            <person name="Ponting C.P."/>
        </authorList>
    </citation>
    <scope>NUCLEOTIDE SEQUENCE [LARGE SCALE GENOMIC DNA]</scope>
    <source>
        <strain>C57BL/6J</strain>
    </source>
</reference>
<organism>
    <name type="scientific">Mus musculus</name>
    <name type="common">Mouse</name>
    <dbReference type="NCBI Taxonomy" id="10090"/>
    <lineage>
        <taxon>Eukaryota</taxon>
        <taxon>Metazoa</taxon>
        <taxon>Chordata</taxon>
        <taxon>Craniata</taxon>
        <taxon>Vertebrata</taxon>
        <taxon>Euteleostomi</taxon>
        <taxon>Mammalia</taxon>
        <taxon>Eutheria</taxon>
        <taxon>Euarchontoglires</taxon>
        <taxon>Glires</taxon>
        <taxon>Rodentia</taxon>
        <taxon>Myomorpha</taxon>
        <taxon>Muroidea</taxon>
        <taxon>Muridae</taxon>
        <taxon>Murinae</taxon>
        <taxon>Mus</taxon>
        <taxon>Mus</taxon>
    </lineage>
</organism>
<proteinExistence type="inferred from homology"/>